<name>RL2_PARS2</name>
<dbReference type="EMBL" id="CP000820">
    <property type="protein sequence ID" value="ABW15390.1"/>
    <property type="molecule type" value="Genomic_DNA"/>
</dbReference>
<dbReference type="RefSeq" id="WP_020463476.1">
    <property type="nucleotide sequence ID" value="NC_009921.1"/>
</dbReference>
<dbReference type="SMR" id="A8LC53"/>
<dbReference type="STRING" id="298653.Franean1_6046"/>
<dbReference type="KEGG" id="fre:Franean1_6046"/>
<dbReference type="eggNOG" id="COG0090">
    <property type="taxonomic scope" value="Bacteria"/>
</dbReference>
<dbReference type="HOGENOM" id="CLU_036235_2_1_11"/>
<dbReference type="GO" id="GO:0015934">
    <property type="term" value="C:large ribosomal subunit"/>
    <property type="evidence" value="ECO:0007669"/>
    <property type="project" value="InterPro"/>
</dbReference>
<dbReference type="GO" id="GO:0019843">
    <property type="term" value="F:rRNA binding"/>
    <property type="evidence" value="ECO:0007669"/>
    <property type="project" value="UniProtKB-UniRule"/>
</dbReference>
<dbReference type="GO" id="GO:0003735">
    <property type="term" value="F:structural constituent of ribosome"/>
    <property type="evidence" value="ECO:0007669"/>
    <property type="project" value="InterPro"/>
</dbReference>
<dbReference type="GO" id="GO:0016740">
    <property type="term" value="F:transferase activity"/>
    <property type="evidence" value="ECO:0007669"/>
    <property type="project" value="InterPro"/>
</dbReference>
<dbReference type="GO" id="GO:0002181">
    <property type="term" value="P:cytoplasmic translation"/>
    <property type="evidence" value="ECO:0007669"/>
    <property type="project" value="TreeGrafter"/>
</dbReference>
<dbReference type="FunFam" id="2.30.30.30:FF:000001">
    <property type="entry name" value="50S ribosomal protein L2"/>
    <property type="match status" value="1"/>
</dbReference>
<dbReference type="FunFam" id="2.40.50.140:FF:000003">
    <property type="entry name" value="50S ribosomal protein L2"/>
    <property type="match status" value="1"/>
</dbReference>
<dbReference type="FunFam" id="4.10.950.10:FF:000001">
    <property type="entry name" value="50S ribosomal protein L2"/>
    <property type="match status" value="1"/>
</dbReference>
<dbReference type="Gene3D" id="2.30.30.30">
    <property type="match status" value="1"/>
</dbReference>
<dbReference type="Gene3D" id="2.40.50.140">
    <property type="entry name" value="Nucleic acid-binding proteins"/>
    <property type="match status" value="1"/>
</dbReference>
<dbReference type="Gene3D" id="4.10.950.10">
    <property type="entry name" value="Ribosomal protein L2, domain 3"/>
    <property type="match status" value="1"/>
</dbReference>
<dbReference type="HAMAP" id="MF_01320_B">
    <property type="entry name" value="Ribosomal_uL2_B"/>
    <property type="match status" value="1"/>
</dbReference>
<dbReference type="InterPro" id="IPR012340">
    <property type="entry name" value="NA-bd_OB-fold"/>
</dbReference>
<dbReference type="InterPro" id="IPR014722">
    <property type="entry name" value="Rib_uL2_dom2"/>
</dbReference>
<dbReference type="InterPro" id="IPR002171">
    <property type="entry name" value="Ribosomal_uL2"/>
</dbReference>
<dbReference type="InterPro" id="IPR005880">
    <property type="entry name" value="Ribosomal_uL2_bac/org-type"/>
</dbReference>
<dbReference type="InterPro" id="IPR022669">
    <property type="entry name" value="Ribosomal_uL2_C"/>
</dbReference>
<dbReference type="InterPro" id="IPR022671">
    <property type="entry name" value="Ribosomal_uL2_CS"/>
</dbReference>
<dbReference type="InterPro" id="IPR014726">
    <property type="entry name" value="Ribosomal_uL2_dom3"/>
</dbReference>
<dbReference type="InterPro" id="IPR022666">
    <property type="entry name" value="Ribosomal_uL2_RNA-bd_dom"/>
</dbReference>
<dbReference type="InterPro" id="IPR008991">
    <property type="entry name" value="Translation_prot_SH3-like_sf"/>
</dbReference>
<dbReference type="NCBIfam" id="TIGR01171">
    <property type="entry name" value="rplB_bact"/>
    <property type="match status" value="1"/>
</dbReference>
<dbReference type="PANTHER" id="PTHR13691:SF5">
    <property type="entry name" value="LARGE RIBOSOMAL SUBUNIT PROTEIN UL2M"/>
    <property type="match status" value="1"/>
</dbReference>
<dbReference type="PANTHER" id="PTHR13691">
    <property type="entry name" value="RIBOSOMAL PROTEIN L2"/>
    <property type="match status" value="1"/>
</dbReference>
<dbReference type="Pfam" id="PF00181">
    <property type="entry name" value="Ribosomal_L2"/>
    <property type="match status" value="1"/>
</dbReference>
<dbReference type="Pfam" id="PF03947">
    <property type="entry name" value="Ribosomal_L2_C"/>
    <property type="match status" value="1"/>
</dbReference>
<dbReference type="PIRSF" id="PIRSF002158">
    <property type="entry name" value="Ribosomal_L2"/>
    <property type="match status" value="1"/>
</dbReference>
<dbReference type="SMART" id="SM01383">
    <property type="entry name" value="Ribosomal_L2"/>
    <property type="match status" value="1"/>
</dbReference>
<dbReference type="SMART" id="SM01382">
    <property type="entry name" value="Ribosomal_L2_C"/>
    <property type="match status" value="1"/>
</dbReference>
<dbReference type="SUPFAM" id="SSF50249">
    <property type="entry name" value="Nucleic acid-binding proteins"/>
    <property type="match status" value="1"/>
</dbReference>
<dbReference type="SUPFAM" id="SSF50104">
    <property type="entry name" value="Translation proteins SH3-like domain"/>
    <property type="match status" value="1"/>
</dbReference>
<dbReference type="PROSITE" id="PS00467">
    <property type="entry name" value="RIBOSOMAL_L2"/>
    <property type="match status" value="1"/>
</dbReference>
<protein>
    <recommendedName>
        <fullName evidence="1">Large ribosomal subunit protein uL2</fullName>
    </recommendedName>
    <alternativeName>
        <fullName evidence="3">50S ribosomal protein L2</fullName>
    </alternativeName>
</protein>
<reference key="1">
    <citation type="journal article" date="2007" name="Genome Res.">
        <title>Genome characteristics of facultatively symbiotic Frankia sp. strains reflect host range and host plant biogeography.</title>
        <authorList>
            <person name="Normand P."/>
            <person name="Lapierre P."/>
            <person name="Tisa L.S."/>
            <person name="Gogarten J.P."/>
            <person name="Alloisio N."/>
            <person name="Bagnarol E."/>
            <person name="Bassi C.A."/>
            <person name="Berry A.M."/>
            <person name="Bickhart D.M."/>
            <person name="Choisne N."/>
            <person name="Couloux A."/>
            <person name="Cournoyer B."/>
            <person name="Cruveiller S."/>
            <person name="Daubin V."/>
            <person name="Demange N."/>
            <person name="Francino M.P."/>
            <person name="Goltsman E."/>
            <person name="Huang Y."/>
            <person name="Kopp O.R."/>
            <person name="Labarre L."/>
            <person name="Lapidus A."/>
            <person name="Lavire C."/>
            <person name="Marechal J."/>
            <person name="Martinez M."/>
            <person name="Mastronunzio J.E."/>
            <person name="Mullin B.C."/>
            <person name="Niemann J."/>
            <person name="Pujic P."/>
            <person name="Rawnsley T."/>
            <person name="Rouy Z."/>
            <person name="Schenowitz C."/>
            <person name="Sellstedt A."/>
            <person name="Tavares F."/>
            <person name="Tomkins J.P."/>
            <person name="Vallenet D."/>
            <person name="Valverde C."/>
            <person name="Wall L.G."/>
            <person name="Wang Y."/>
            <person name="Medigue C."/>
            <person name="Benson D.R."/>
        </authorList>
    </citation>
    <scope>NUCLEOTIDE SEQUENCE [LARGE SCALE GENOMIC DNA]</scope>
    <source>
        <strain>EAN1pec</strain>
    </source>
</reference>
<gene>
    <name evidence="1" type="primary">rplB</name>
    <name type="ordered locus">Franean1_6046</name>
</gene>
<evidence type="ECO:0000255" key="1">
    <source>
        <dbReference type="HAMAP-Rule" id="MF_01320"/>
    </source>
</evidence>
<evidence type="ECO:0000256" key="2">
    <source>
        <dbReference type="SAM" id="MobiDB-lite"/>
    </source>
</evidence>
<evidence type="ECO:0000305" key="3"/>
<organism>
    <name type="scientific">Parafrankia sp. (strain EAN1pec)</name>
    <dbReference type="NCBI Taxonomy" id="298653"/>
    <lineage>
        <taxon>Bacteria</taxon>
        <taxon>Bacillati</taxon>
        <taxon>Actinomycetota</taxon>
        <taxon>Actinomycetes</taxon>
        <taxon>Frankiales</taxon>
        <taxon>Frankiaceae</taxon>
        <taxon>Parafrankia</taxon>
    </lineage>
</organism>
<accession>A8LC53</accession>
<keyword id="KW-0687">Ribonucleoprotein</keyword>
<keyword id="KW-0689">Ribosomal protein</keyword>
<keyword id="KW-0694">RNA-binding</keyword>
<keyword id="KW-0699">rRNA-binding</keyword>
<sequence length="277" mass="30452">MGIRRYKPTTPGRRGSSVADFVEITRDHPEKSLVRPLHSKGGRNVHGRITTRHQGGGHKRAYRIIDFRRDKDGVPAKVAHIEYDPNRTARIALLHYVDGEKRYILAPVKLHQGDMVSSGVGADIKPGNALPLRNIPTGTVVHAIELRPGGGAKIARSAGASVQLVAKDGPYAQLRMPSGEIRNVDVRCRATVGEVGNAEQSNINWGKAGRMRWKGRRPTVRGVAMNPVDHPHGGGEGKTSGGRHPVNPKGRPEGRTRRTKKSSDALIVRRRKQNRRR</sequence>
<feature type="chain" id="PRO_1000141555" description="Large ribosomal subunit protein uL2">
    <location>
        <begin position="1"/>
        <end position="277"/>
    </location>
</feature>
<feature type="region of interest" description="Disordered" evidence="2">
    <location>
        <begin position="37"/>
        <end position="58"/>
    </location>
</feature>
<feature type="region of interest" description="Disordered" evidence="2">
    <location>
        <begin position="222"/>
        <end position="277"/>
    </location>
</feature>
<feature type="compositionally biased region" description="Basic residues" evidence="2">
    <location>
        <begin position="268"/>
        <end position="277"/>
    </location>
</feature>
<proteinExistence type="inferred from homology"/>
<comment type="function">
    <text evidence="1">One of the primary rRNA binding proteins. Required for association of the 30S and 50S subunits to form the 70S ribosome, for tRNA binding and peptide bond formation. It has been suggested to have peptidyltransferase activity; this is somewhat controversial. Makes several contacts with the 16S rRNA in the 70S ribosome.</text>
</comment>
<comment type="subunit">
    <text evidence="1">Part of the 50S ribosomal subunit. Forms a bridge to the 30S subunit in the 70S ribosome.</text>
</comment>
<comment type="similarity">
    <text evidence="1">Belongs to the universal ribosomal protein uL2 family.</text>
</comment>